<dbReference type="EMBL" id="AB010070">
    <property type="protein sequence ID" value="BAB11455.1"/>
    <property type="status" value="ALT_SEQ"/>
    <property type="molecule type" value="Genomic_DNA"/>
</dbReference>
<dbReference type="EMBL" id="CP002688">
    <property type="protein sequence ID" value="AED91200.1"/>
    <property type="status" value="ALT_SEQ"/>
    <property type="molecule type" value="Genomic_DNA"/>
</dbReference>
<dbReference type="SMR" id="P0C5K4"/>
<dbReference type="STRING" id="3702.P0C5K4"/>
<dbReference type="GlyGen" id="P0C5K4">
    <property type="glycosylation" value="2 sites"/>
</dbReference>
<dbReference type="Araport" id="AT5G07760"/>
<dbReference type="TAIR" id="AT5G07760"/>
<dbReference type="eggNOG" id="KOG1922">
    <property type="taxonomic scope" value="Eukaryota"/>
</dbReference>
<dbReference type="HOGENOM" id="CLU_366986_0_0_1"/>
<dbReference type="InParanoid" id="P0C5K4"/>
<dbReference type="PhylomeDB" id="P0C5K4"/>
<dbReference type="PRO" id="PR:P0C5K4"/>
<dbReference type="Proteomes" id="UP000006548">
    <property type="component" value="Chromosome 5"/>
</dbReference>
<dbReference type="ExpressionAtlas" id="P0C5K4">
    <property type="expression patterns" value="baseline and differential"/>
</dbReference>
<dbReference type="Gene3D" id="1.20.58.2220">
    <property type="entry name" value="Formin, FH2 domain"/>
    <property type="match status" value="1"/>
</dbReference>
<dbReference type="InterPro" id="IPR015425">
    <property type="entry name" value="FH2_Formin"/>
</dbReference>
<dbReference type="InterPro" id="IPR042201">
    <property type="entry name" value="FH2_Formin_sf"/>
</dbReference>
<dbReference type="InterPro" id="IPR051144">
    <property type="entry name" value="Formin_homology_domain"/>
</dbReference>
<dbReference type="PANTHER" id="PTHR45733">
    <property type="entry name" value="FORMIN-J"/>
    <property type="match status" value="1"/>
</dbReference>
<dbReference type="PANTHER" id="PTHR45733:SF10">
    <property type="entry name" value="FORMIN-LIKE PROTEIN 15A-RELATED"/>
    <property type="match status" value="1"/>
</dbReference>
<dbReference type="Pfam" id="PF02181">
    <property type="entry name" value="FH2"/>
    <property type="match status" value="1"/>
</dbReference>
<dbReference type="SMART" id="SM00498">
    <property type="entry name" value="FH2"/>
    <property type="match status" value="1"/>
</dbReference>
<dbReference type="SUPFAM" id="SSF101447">
    <property type="entry name" value="Formin homology 2 domain (FH2 domain)"/>
    <property type="match status" value="1"/>
</dbReference>
<dbReference type="PROSITE" id="PS51444">
    <property type="entry name" value="FH2"/>
    <property type="match status" value="1"/>
</dbReference>
<reference key="1">
    <citation type="journal article" date="1998" name="DNA Res.">
        <title>Structural analysis of Arabidopsis thaliana chromosome 5. IV. Sequence features of the regions of 1,456,315 bp covered by nineteen physically assigned P1 and TAC clones.</title>
        <authorList>
            <person name="Sato S."/>
            <person name="Kaneko T."/>
            <person name="Kotani H."/>
            <person name="Nakamura Y."/>
            <person name="Asamizu E."/>
            <person name="Miyajima N."/>
            <person name="Tabata S."/>
        </authorList>
    </citation>
    <scope>NUCLEOTIDE SEQUENCE [LARGE SCALE GENOMIC DNA]</scope>
    <source>
        <strain>cv. Columbia</strain>
    </source>
</reference>
<reference key="2">
    <citation type="journal article" date="2017" name="Plant J.">
        <title>Araport11: a complete reannotation of the Arabidopsis thaliana reference genome.</title>
        <authorList>
            <person name="Cheng C.Y."/>
            <person name="Krishnakumar V."/>
            <person name="Chan A.P."/>
            <person name="Thibaud-Nissen F."/>
            <person name="Schobel S."/>
            <person name="Town C.D."/>
        </authorList>
    </citation>
    <scope>GENOME REANNOTATION</scope>
    <source>
        <strain>cv. Columbia</strain>
    </source>
</reference>
<reference key="3">
    <citation type="journal article" date="2002" name="Trends Plant Sci.">
        <title>Formins: intermediates in signal-transduction cascades that affect cytoskeletal reorganization.</title>
        <authorList>
            <person name="Deeks M.J."/>
            <person name="Hussey P.J."/>
            <person name="Davies B."/>
        </authorList>
    </citation>
    <scope>GENE FAMILY ORGANIZATION</scope>
    <scope>NOMENCLATURE</scope>
</reference>
<reference key="4">
    <citation type="journal article" date="2004" name="BMC Genomics">
        <title>Formin homology 2 domains occur in multiple contexts in angiosperms.</title>
        <authorList>
            <person name="Cvrckova F."/>
            <person name="Novotny M."/>
            <person name="Pickova D."/>
            <person name="Zarsky V."/>
        </authorList>
    </citation>
    <scope>GENE FAMILY ORGANIZATION</scope>
    <scope>NOMENCLATURE</scope>
</reference>
<keyword id="KW-1185">Reference proteome</keyword>
<name>FH21A_ARATH</name>
<organism>
    <name type="scientific">Arabidopsis thaliana</name>
    <name type="common">Mouse-ear cress</name>
    <dbReference type="NCBI Taxonomy" id="3702"/>
    <lineage>
        <taxon>Eukaryota</taxon>
        <taxon>Viridiplantae</taxon>
        <taxon>Streptophyta</taxon>
        <taxon>Embryophyta</taxon>
        <taxon>Tracheophyta</taxon>
        <taxon>Spermatophyta</taxon>
        <taxon>Magnoliopsida</taxon>
        <taxon>eudicotyledons</taxon>
        <taxon>Gunneridae</taxon>
        <taxon>Pentapetalae</taxon>
        <taxon>rosids</taxon>
        <taxon>malvids</taxon>
        <taxon>Brassicales</taxon>
        <taxon>Brassicaceae</taxon>
        <taxon>Camelineae</taxon>
        <taxon>Arabidopsis</taxon>
    </lineage>
</organism>
<sequence length="438" mass="49276">MSPVEISGADAVVSPPMRGRVPLPPPPPPPPPPMRRRAPLPPPPPPPMRRRAPLPPPPPPAMRRRVLPRPPPPPPPLPMFDAEVLCCCYPPTRVRREAPLPPPPLIFVGAPPPTCALKGIVCCFPCPSKKKSSLKRFNWVKITRALPGSLWDELQIQQVCHGDIEDEQILCAIELDVSEIETFFSLGAAKPEKDPLIDLRRATDTELTLMLLNIRLPADMMAAIMAMDESVLDDDEIRGLINLFPTKENMELLMSYTGGKWTLEKWEQYFQELRKVLRVESKLRVFYFKIQFSTKITQFKKRLNVVNSACEEVCSSQKLKEIMKKITCLGNTSNQGTGRGVTVGFNLDSLCVKSMHNFCKVLASEASDLLDVHKDLQSLESASKKQLKSLAEEMQDIIRDLEKLNQELTAAETDGPDSQVFRNVCWFCSYGYFDQPWI</sequence>
<feature type="chain" id="PRO_0000308547" description="Putative formin-like protein 21a">
    <location>
        <begin position="1"/>
        <end position="438"/>
    </location>
</feature>
<feature type="domain" description="FH2" evidence="1">
    <location>
        <begin position="124"/>
        <end position="438"/>
    </location>
</feature>
<feature type="region of interest" description="Disordered" evidence="2">
    <location>
        <begin position="1"/>
        <end position="74"/>
    </location>
</feature>
<feature type="compositionally biased region" description="Pro residues" evidence="2">
    <location>
        <begin position="22"/>
        <end position="61"/>
    </location>
</feature>
<protein>
    <recommendedName>
        <fullName>Putative formin-like protein 21a</fullName>
        <shortName>AtFH21a</shortName>
    </recommendedName>
</protein>
<gene>
    <name type="primary">FH21A</name>
    <name type="ordered locus">At5g07760</name>
    <name type="ORF">MBK20.22</name>
</gene>
<proteinExistence type="inferred from homology"/>
<evidence type="ECO:0000255" key="1">
    <source>
        <dbReference type="PROSITE-ProRule" id="PRU00774"/>
    </source>
</evidence>
<evidence type="ECO:0000256" key="2">
    <source>
        <dbReference type="SAM" id="MobiDB-lite"/>
    </source>
</evidence>
<evidence type="ECO:0000305" key="3"/>
<accession>P0C5K4</accession>
<accession>F4K849</accession>
<accession>Q9FLQ6</accession>
<comment type="similarity">
    <text evidence="3">Belongs to the formin-like family. Class-II subfamily.</text>
</comment>
<comment type="sequence caution" evidence="3">
    <conflict type="erroneous gene model prediction">
        <sequence resource="EMBL-CDS" id="AED91200"/>
    </conflict>
    <text>The predicted gene At5g07760 has been split into 2 genes: At5g07760 and At5g07765.</text>
</comment>
<comment type="sequence caution" evidence="3">
    <conflict type="erroneous gene model prediction">
        <sequence resource="EMBL-CDS" id="BAB11455"/>
    </conflict>
    <text>The predicted gene At5g07760 has been split into 2 genes: At5g07760 and At5g07765.</text>
</comment>